<protein>
    <recommendedName>
        <fullName>FYVE, RhoGEF and PH domain-containing protein 1</fullName>
    </recommendedName>
    <alternativeName>
        <fullName>Faciogenital dysplasia 1 protein</fullName>
    </alternativeName>
    <alternativeName>
        <fullName>Rho/Rac guanine nucleotide exchange factor FGD1</fullName>
        <shortName>Rho/Rac GEF</shortName>
    </alternativeName>
    <alternativeName>
        <fullName>Zinc finger FYVE domain-containing protein 3</fullName>
    </alternativeName>
</protein>
<reference key="1">
    <citation type="journal article" date="1994" name="Cell">
        <title>Isolation and characterization of the faciogenital dysplasia (Aarskog-Scott syndrome) gene: a putative Rho/Rac guanine nucleotide exchange factor.</title>
        <authorList>
            <person name="Pasteris N.G."/>
            <person name="Cadle A."/>
            <person name="Logie L.J."/>
            <person name="Porteous M.E.M."/>
            <person name="Schwartz C.E."/>
            <person name="Stevenson R.E."/>
            <person name="Glover T.W."/>
            <person name="Wilroy R.S."/>
            <person name="Gorski J.L."/>
        </authorList>
    </citation>
    <scope>NUCLEOTIDE SEQUENCE [MRNA]</scope>
    <source>
        <tissue>Craniofacial</tissue>
    </source>
</reference>
<reference key="2">
    <citation type="journal article" date="2005" name="Nature">
        <title>The DNA sequence of the human X chromosome.</title>
        <authorList>
            <person name="Ross M.T."/>
            <person name="Grafham D.V."/>
            <person name="Coffey A.J."/>
            <person name="Scherer S."/>
            <person name="McLay K."/>
            <person name="Muzny D."/>
            <person name="Platzer M."/>
            <person name="Howell G.R."/>
            <person name="Burrows C."/>
            <person name="Bird C.P."/>
            <person name="Frankish A."/>
            <person name="Lovell F.L."/>
            <person name="Howe K.L."/>
            <person name="Ashurst J.L."/>
            <person name="Fulton R.S."/>
            <person name="Sudbrak R."/>
            <person name="Wen G."/>
            <person name="Jones M.C."/>
            <person name="Hurles M.E."/>
            <person name="Andrews T.D."/>
            <person name="Scott C.E."/>
            <person name="Searle S."/>
            <person name="Ramser J."/>
            <person name="Whittaker A."/>
            <person name="Deadman R."/>
            <person name="Carter N.P."/>
            <person name="Hunt S.E."/>
            <person name="Chen R."/>
            <person name="Cree A."/>
            <person name="Gunaratne P."/>
            <person name="Havlak P."/>
            <person name="Hodgson A."/>
            <person name="Metzker M.L."/>
            <person name="Richards S."/>
            <person name="Scott G."/>
            <person name="Steffen D."/>
            <person name="Sodergren E."/>
            <person name="Wheeler D.A."/>
            <person name="Worley K.C."/>
            <person name="Ainscough R."/>
            <person name="Ambrose K.D."/>
            <person name="Ansari-Lari M.A."/>
            <person name="Aradhya S."/>
            <person name="Ashwell R.I."/>
            <person name="Babbage A.K."/>
            <person name="Bagguley C.L."/>
            <person name="Ballabio A."/>
            <person name="Banerjee R."/>
            <person name="Barker G.E."/>
            <person name="Barlow K.F."/>
            <person name="Barrett I.P."/>
            <person name="Bates K.N."/>
            <person name="Beare D.M."/>
            <person name="Beasley H."/>
            <person name="Beasley O."/>
            <person name="Beck A."/>
            <person name="Bethel G."/>
            <person name="Blechschmidt K."/>
            <person name="Brady N."/>
            <person name="Bray-Allen S."/>
            <person name="Bridgeman A.M."/>
            <person name="Brown A.J."/>
            <person name="Brown M.J."/>
            <person name="Bonnin D."/>
            <person name="Bruford E.A."/>
            <person name="Buhay C."/>
            <person name="Burch P."/>
            <person name="Burford D."/>
            <person name="Burgess J."/>
            <person name="Burrill W."/>
            <person name="Burton J."/>
            <person name="Bye J.M."/>
            <person name="Carder C."/>
            <person name="Carrel L."/>
            <person name="Chako J."/>
            <person name="Chapman J.C."/>
            <person name="Chavez D."/>
            <person name="Chen E."/>
            <person name="Chen G."/>
            <person name="Chen Y."/>
            <person name="Chen Z."/>
            <person name="Chinault C."/>
            <person name="Ciccodicola A."/>
            <person name="Clark S.Y."/>
            <person name="Clarke G."/>
            <person name="Clee C.M."/>
            <person name="Clegg S."/>
            <person name="Clerc-Blankenburg K."/>
            <person name="Clifford K."/>
            <person name="Cobley V."/>
            <person name="Cole C.G."/>
            <person name="Conquer J.S."/>
            <person name="Corby N."/>
            <person name="Connor R.E."/>
            <person name="David R."/>
            <person name="Davies J."/>
            <person name="Davis C."/>
            <person name="Davis J."/>
            <person name="Delgado O."/>
            <person name="Deshazo D."/>
            <person name="Dhami P."/>
            <person name="Ding Y."/>
            <person name="Dinh H."/>
            <person name="Dodsworth S."/>
            <person name="Draper H."/>
            <person name="Dugan-Rocha S."/>
            <person name="Dunham A."/>
            <person name="Dunn M."/>
            <person name="Durbin K.J."/>
            <person name="Dutta I."/>
            <person name="Eades T."/>
            <person name="Ellwood M."/>
            <person name="Emery-Cohen A."/>
            <person name="Errington H."/>
            <person name="Evans K.L."/>
            <person name="Faulkner L."/>
            <person name="Francis F."/>
            <person name="Frankland J."/>
            <person name="Fraser A.E."/>
            <person name="Galgoczy P."/>
            <person name="Gilbert J."/>
            <person name="Gill R."/>
            <person name="Gloeckner G."/>
            <person name="Gregory S.G."/>
            <person name="Gribble S."/>
            <person name="Griffiths C."/>
            <person name="Grocock R."/>
            <person name="Gu Y."/>
            <person name="Gwilliam R."/>
            <person name="Hamilton C."/>
            <person name="Hart E.A."/>
            <person name="Hawes A."/>
            <person name="Heath P.D."/>
            <person name="Heitmann K."/>
            <person name="Hennig S."/>
            <person name="Hernandez J."/>
            <person name="Hinzmann B."/>
            <person name="Ho S."/>
            <person name="Hoffs M."/>
            <person name="Howden P.J."/>
            <person name="Huckle E.J."/>
            <person name="Hume J."/>
            <person name="Hunt P.J."/>
            <person name="Hunt A.R."/>
            <person name="Isherwood J."/>
            <person name="Jacob L."/>
            <person name="Johnson D."/>
            <person name="Jones S."/>
            <person name="de Jong P.J."/>
            <person name="Joseph S.S."/>
            <person name="Keenan S."/>
            <person name="Kelly S."/>
            <person name="Kershaw J.K."/>
            <person name="Khan Z."/>
            <person name="Kioschis P."/>
            <person name="Klages S."/>
            <person name="Knights A.J."/>
            <person name="Kosiura A."/>
            <person name="Kovar-Smith C."/>
            <person name="Laird G.K."/>
            <person name="Langford C."/>
            <person name="Lawlor S."/>
            <person name="Leversha M."/>
            <person name="Lewis L."/>
            <person name="Liu W."/>
            <person name="Lloyd C."/>
            <person name="Lloyd D.M."/>
            <person name="Loulseged H."/>
            <person name="Loveland J.E."/>
            <person name="Lovell J.D."/>
            <person name="Lozado R."/>
            <person name="Lu J."/>
            <person name="Lyne R."/>
            <person name="Ma J."/>
            <person name="Maheshwari M."/>
            <person name="Matthews L.H."/>
            <person name="McDowall J."/>
            <person name="McLaren S."/>
            <person name="McMurray A."/>
            <person name="Meidl P."/>
            <person name="Meitinger T."/>
            <person name="Milne S."/>
            <person name="Miner G."/>
            <person name="Mistry S.L."/>
            <person name="Morgan M."/>
            <person name="Morris S."/>
            <person name="Mueller I."/>
            <person name="Mullikin J.C."/>
            <person name="Nguyen N."/>
            <person name="Nordsiek G."/>
            <person name="Nyakatura G."/>
            <person name="O'dell C.N."/>
            <person name="Okwuonu G."/>
            <person name="Palmer S."/>
            <person name="Pandian R."/>
            <person name="Parker D."/>
            <person name="Parrish J."/>
            <person name="Pasternak S."/>
            <person name="Patel D."/>
            <person name="Pearce A.V."/>
            <person name="Pearson D.M."/>
            <person name="Pelan S.E."/>
            <person name="Perez L."/>
            <person name="Porter K.M."/>
            <person name="Ramsey Y."/>
            <person name="Reichwald K."/>
            <person name="Rhodes S."/>
            <person name="Ridler K.A."/>
            <person name="Schlessinger D."/>
            <person name="Schueler M.G."/>
            <person name="Sehra H.K."/>
            <person name="Shaw-Smith C."/>
            <person name="Shen H."/>
            <person name="Sheridan E.M."/>
            <person name="Shownkeen R."/>
            <person name="Skuce C.D."/>
            <person name="Smith M.L."/>
            <person name="Sotheran E.C."/>
            <person name="Steingruber H.E."/>
            <person name="Steward C.A."/>
            <person name="Storey R."/>
            <person name="Swann R.M."/>
            <person name="Swarbreck D."/>
            <person name="Tabor P.E."/>
            <person name="Taudien S."/>
            <person name="Taylor T."/>
            <person name="Teague B."/>
            <person name="Thomas K."/>
            <person name="Thorpe A."/>
            <person name="Timms K."/>
            <person name="Tracey A."/>
            <person name="Trevanion S."/>
            <person name="Tromans A.C."/>
            <person name="d'Urso M."/>
            <person name="Verduzco D."/>
            <person name="Villasana D."/>
            <person name="Waldron L."/>
            <person name="Wall M."/>
            <person name="Wang Q."/>
            <person name="Warren J."/>
            <person name="Warry G.L."/>
            <person name="Wei X."/>
            <person name="West A."/>
            <person name="Whitehead S.L."/>
            <person name="Whiteley M.N."/>
            <person name="Wilkinson J.E."/>
            <person name="Willey D.L."/>
            <person name="Williams G."/>
            <person name="Williams L."/>
            <person name="Williamson A."/>
            <person name="Williamson H."/>
            <person name="Wilming L."/>
            <person name="Woodmansey R.L."/>
            <person name="Wray P.W."/>
            <person name="Yen J."/>
            <person name="Zhang J."/>
            <person name="Zhou J."/>
            <person name="Zoghbi H."/>
            <person name="Zorilla S."/>
            <person name="Buck D."/>
            <person name="Reinhardt R."/>
            <person name="Poustka A."/>
            <person name="Rosenthal A."/>
            <person name="Lehrach H."/>
            <person name="Meindl A."/>
            <person name="Minx P.J."/>
            <person name="Hillier L.W."/>
            <person name="Willard H.F."/>
            <person name="Wilson R.K."/>
            <person name="Waterston R.H."/>
            <person name="Rice C.M."/>
            <person name="Vaudin M."/>
            <person name="Coulson A."/>
            <person name="Nelson D.L."/>
            <person name="Weinstock G."/>
            <person name="Sulston J.E."/>
            <person name="Durbin R.M."/>
            <person name="Hubbard T."/>
            <person name="Gibbs R.A."/>
            <person name="Beck S."/>
            <person name="Rogers J."/>
            <person name="Bentley D.R."/>
        </authorList>
    </citation>
    <scope>NUCLEOTIDE SEQUENCE [LARGE SCALE GENOMIC DNA]</scope>
</reference>
<reference key="3">
    <citation type="submission" date="2005-07" db="EMBL/GenBank/DDBJ databases">
        <authorList>
            <person name="Mural R.J."/>
            <person name="Istrail S."/>
            <person name="Sutton G.G."/>
            <person name="Florea L."/>
            <person name="Halpern A.L."/>
            <person name="Mobarry C.M."/>
            <person name="Lippert R."/>
            <person name="Walenz B."/>
            <person name="Shatkay H."/>
            <person name="Dew I."/>
            <person name="Miller J.R."/>
            <person name="Flanigan M.J."/>
            <person name="Edwards N.J."/>
            <person name="Bolanos R."/>
            <person name="Fasulo D."/>
            <person name="Halldorsson B.V."/>
            <person name="Hannenhalli S."/>
            <person name="Turner R."/>
            <person name="Yooseph S."/>
            <person name="Lu F."/>
            <person name="Nusskern D.R."/>
            <person name="Shue B.C."/>
            <person name="Zheng X.H."/>
            <person name="Zhong F."/>
            <person name="Delcher A.L."/>
            <person name="Huson D.H."/>
            <person name="Kravitz S.A."/>
            <person name="Mouchard L."/>
            <person name="Reinert K."/>
            <person name="Remington K.A."/>
            <person name="Clark A.G."/>
            <person name="Waterman M.S."/>
            <person name="Eichler E.E."/>
            <person name="Adams M.D."/>
            <person name="Hunkapiller M.W."/>
            <person name="Myers E.W."/>
            <person name="Venter J.C."/>
        </authorList>
    </citation>
    <scope>NUCLEOTIDE SEQUENCE [LARGE SCALE GENOMIC DNA]</scope>
</reference>
<reference key="4">
    <citation type="journal article" date="2004" name="Genome Res.">
        <title>The status, quality, and expansion of the NIH full-length cDNA project: the Mammalian Gene Collection (MGC).</title>
        <authorList>
            <consortium name="The MGC Project Team"/>
        </authorList>
    </citation>
    <scope>NUCLEOTIDE SEQUENCE [LARGE SCALE MRNA]</scope>
    <source>
        <tissue>Brain</tissue>
    </source>
</reference>
<reference key="5">
    <citation type="journal article" date="1996" name="J. Biol. Chem.">
        <title>The faciogenital dysplasia gene product FGD1 functions as a Cdc42Hs-specific guanine-nucleotide exchange factor.</title>
        <authorList>
            <person name="Zheng Y."/>
            <person name="Fischer D.J."/>
            <person name="Santos M.F."/>
            <person name="Tigyi G."/>
            <person name="Pasteris N.G."/>
            <person name="Gorski J.L."/>
            <person name="Xu Y."/>
        </authorList>
    </citation>
    <scope>FUNCTION</scope>
</reference>
<reference key="6">
    <citation type="journal article" date="2008" name="Proc. Natl. Acad. Sci. U.S.A.">
        <title>A quantitative atlas of mitotic phosphorylation.</title>
        <authorList>
            <person name="Dephoure N."/>
            <person name="Zhou C."/>
            <person name="Villen J."/>
            <person name="Beausoleil S.A."/>
            <person name="Bakalarski C.E."/>
            <person name="Elledge S.J."/>
            <person name="Gygi S.P."/>
        </authorList>
    </citation>
    <scope>PHOSPHORYLATION [LARGE SCALE ANALYSIS] AT SER-48; SER-205; THR-711 AND SER-715</scope>
    <scope>IDENTIFICATION BY MASS SPECTROMETRY [LARGE SCALE ANALYSIS]</scope>
    <source>
        <tissue>Cervix carcinoma</tissue>
    </source>
</reference>
<reference key="7">
    <citation type="journal article" date="2010" name="Sci. Signal.">
        <title>Quantitative phosphoproteomics reveals widespread full phosphorylation site occupancy during mitosis.</title>
        <authorList>
            <person name="Olsen J.V."/>
            <person name="Vermeulen M."/>
            <person name="Santamaria A."/>
            <person name="Kumar C."/>
            <person name="Miller M.L."/>
            <person name="Jensen L.J."/>
            <person name="Gnad F."/>
            <person name="Cox J."/>
            <person name="Jensen T.S."/>
            <person name="Nigg E.A."/>
            <person name="Brunak S."/>
            <person name="Mann M."/>
        </authorList>
    </citation>
    <scope>IDENTIFICATION BY MASS SPECTROMETRY [LARGE SCALE ANALYSIS]</scope>
    <source>
        <tissue>Cervix carcinoma</tissue>
    </source>
</reference>
<reference key="8">
    <citation type="journal article" date="2013" name="J. Proteome Res.">
        <title>Toward a comprehensive characterization of a human cancer cell phosphoproteome.</title>
        <authorList>
            <person name="Zhou H."/>
            <person name="Di Palma S."/>
            <person name="Preisinger C."/>
            <person name="Peng M."/>
            <person name="Polat A.N."/>
            <person name="Heck A.J."/>
            <person name="Mohammed S."/>
        </authorList>
    </citation>
    <scope>IDENTIFICATION BY MASS SPECTROMETRY [LARGE SCALE ANALYSIS]</scope>
    <source>
        <tissue>Cervix carcinoma</tissue>
    </source>
</reference>
<reference key="9">
    <citation type="journal article" date="2000" name="Eur. J. Hum. Genet.">
        <title>Two novel mutations confirm FGD1 is responsible for the Aarskog syndrome.</title>
        <authorList>
            <person name="Schwartz C.E."/>
            <person name="Gillessen-Kaesbach G."/>
            <person name="May M."/>
            <person name="Cappa M."/>
            <person name="Gorski J.L."/>
            <person name="Steindl K."/>
            <person name="Neri G."/>
        </authorList>
    </citation>
    <scope>VARIANT AAS HIS-522</scope>
</reference>
<reference key="10">
    <citation type="journal article" date="2000" name="FEBS Lett.">
        <title>A mutation in the pleckstrin homology (PH) domain of the FGD1 gene in an Italian family with faciogenital dysplasia (Aarskog-Scott syndrome).</title>
        <authorList>
            <person name="Orrico A."/>
            <person name="Galli L."/>
            <person name="Falciani M."/>
            <person name="Bracci M."/>
            <person name="Cavaliere M.L."/>
            <person name="Rinaldi M.M."/>
            <person name="Musacchio A."/>
            <person name="Sorrentino V."/>
        </authorList>
    </citation>
    <scope>VARIANT AAS GLN-610</scope>
</reference>
<reference key="11">
    <citation type="journal article" date="2002" name="Clin. Genet.">
        <title>Non-syndromic X-linked mental retardation associated with a missense mutation (P312L) in the FGD1 gene.</title>
        <authorList>
            <person name="Lebel R.R."/>
            <person name="May M."/>
            <person name="Pouls S."/>
            <person name="Lubs H.A."/>
            <person name="Stevenson R.E."/>
            <person name="Schwartz C.E."/>
        </authorList>
    </citation>
    <scope>VARIANT LEU-312</scope>
</reference>
<reference key="12">
    <citation type="journal article" date="2004" name="Eur. J. Hum. Genet.">
        <title>Phenotypic and molecular characterisation of the Aarskog-Scott syndrome: a survey of the clinical variability in light of FGD1 mutation analysis in 46 patients.</title>
        <authorList>
            <person name="Orrico A."/>
            <person name="Galli L."/>
            <person name="Cavaliere M.L."/>
            <person name="Garavelli L."/>
            <person name="Fryns J.-P."/>
            <person name="Crushell E."/>
            <person name="Rinaldi M.M."/>
            <person name="Medeira A."/>
            <person name="Sorrentino V."/>
        </authorList>
    </citation>
    <scope>VARIANTS AAS ILE-205; ALA-380 AND HIS-443</scope>
</reference>
<comment type="function">
    <text evidence="11">Activates CDC42, a member of the Ras-like family of Rho- and Rac proteins, by exchanging bound GDP for free GTP. Plays a role in regulating the actin cytoskeleton and cell shape.</text>
</comment>
<comment type="subunit">
    <text evidence="1">Interacts with DBNL/ABP1 and CTTN. May interact with CCPG1 (By similarity). Binds CDC42.</text>
</comment>
<comment type="subcellular location">
    <subcellularLocation>
        <location evidence="1">Cytoplasm</location>
    </subcellularLocation>
    <subcellularLocation>
        <location evidence="1">Cell projection</location>
        <location evidence="1">Lamellipodium</location>
    </subcellularLocation>
    <subcellularLocation>
        <location evidence="1">Cell projection</location>
        <location evidence="1">Ruffle</location>
    </subcellularLocation>
    <subcellularLocation>
        <location evidence="1">Cytoplasm</location>
        <location evidence="1">Cytoskeleton</location>
    </subcellularLocation>
    <text evidence="1">Associated with membrane ruffles and lamellipodia.</text>
</comment>
<comment type="tissue specificity">
    <text>Expressed in fetal heart, brain, lung, kidney and placenta. Less expressed in liver; adult heart, brain, lung, pancreas and skeletal muscle.</text>
</comment>
<comment type="domain">
    <text evidence="1">The DH domain is involved in interaction with CCPG1.</text>
</comment>
<comment type="disease" evidence="7 8 10">
    <disease id="DI-00012">
        <name>Aarskog-Scott syndrome</name>
        <acronym>AAS</acronym>
        <description>An X-linked recessive, rare multisystemic disorder characterized by disproportionately short stature, and by facial, skeletal and urogenital anomalies. Some patients manifest intellectual disability, attention deficit disorder and hyperactivity.</description>
        <dbReference type="MIM" id="305400"/>
    </disease>
    <text>The disease is caused by variants affecting the gene represented in this entry.</text>
</comment>
<proteinExistence type="evidence at protein level"/>
<sequence>MHGHRAPGGAGPSEPEHPATNPPGAAPPACADSDPGASEPGLLARRGSGSALGGPLDPQFVGPSDTSLGAAPGHRVLPCGPSPQHHRALRFSYHLEGSQPRPGLHQGNRILVKSLSLDPGQSLEPHPEGPQRLRSDPGPPTETPSQRPSPLKRAPGPKPQVPPKPSYLQMPRMPPPLEPIPPPPSRPLPADPRVAKGLAPRAEASPSSAAVSSLIEKFEREPVIVASDRPVPGPSPGPPEPVMLPQPTSQPPVPQLPEGEASRCLFLLAPGPRDGEKVPNRDSGIDSISSPSNSEETCFVSDDGPPSHSLCPGPPALASVPVALADPHRPGSQEVDSDLEEEDDEEEEEEKDREIPVPLMERQESVELTVQQKVFHIANELLQTEKAYVSRLHLLDQVFCARLLEEARNRSSFPADVVHGIFSNICSIYCFHQQFLLPELEKRMEEWDRYPRIGDILQKLAPFLKMYGEYVKNFDRAVELVNTWTERSTQFKVIIHEVQKEEACGNLTLQHHMLEPVQRIPRYELLLKDYLLKLPHGSPDSKDAQKSLELIATAAEHSNAAIRKMERMHKLLKVYELLGGEEDIVSPTKELIKEGHILKLSAKNGTTQDRYLILFNDRLLYCVPRLRLLGQKFSVRARIDVDGMELKESSNLNLPRTFLVSGKQRSLELQARTEEEKKDWVQAINSTLLKHEQTLETFKLLNSTNREDEDTPPNSPNVDLGKRAPTPIREKEVTMCMRCQEPFNSITKRRHHCKACGHVVCGKCSEFRARLVYDNNRSNRVCTDCYVALHGVPGSSPACSQHTPQRRRSILEKQASVAAENSVICSFLHYMEKGGKGWHKAWFVVPENEPLVLYIYGAPQDVKAQRSLPLIGFEVGPPEAGERPDRRHVFKITQSHLSWYFSPETEELQRRWMAVLGRAGRGDTFCPGPTLSEDREMEEAPVAALGATAEPPESPQTRDKT</sequence>
<organism>
    <name type="scientific">Homo sapiens</name>
    <name type="common">Human</name>
    <dbReference type="NCBI Taxonomy" id="9606"/>
    <lineage>
        <taxon>Eukaryota</taxon>
        <taxon>Metazoa</taxon>
        <taxon>Chordata</taxon>
        <taxon>Craniata</taxon>
        <taxon>Vertebrata</taxon>
        <taxon>Euteleostomi</taxon>
        <taxon>Mammalia</taxon>
        <taxon>Eutheria</taxon>
        <taxon>Euarchontoglires</taxon>
        <taxon>Primates</taxon>
        <taxon>Haplorrhini</taxon>
        <taxon>Catarrhini</taxon>
        <taxon>Hominidae</taxon>
        <taxon>Homo</taxon>
    </lineage>
</organism>
<dbReference type="EMBL" id="U11690">
    <property type="protein sequence ID" value="AAA57004.1"/>
    <property type="molecule type" value="mRNA"/>
</dbReference>
<dbReference type="EMBL" id="Z85987">
    <property type="status" value="NOT_ANNOTATED_CDS"/>
    <property type="molecule type" value="Genomic_DNA"/>
</dbReference>
<dbReference type="EMBL" id="CH471154">
    <property type="protein sequence ID" value="EAW93179.1"/>
    <property type="molecule type" value="Genomic_DNA"/>
</dbReference>
<dbReference type="EMBL" id="BC034530">
    <property type="protein sequence ID" value="AAH34530.1"/>
    <property type="molecule type" value="mRNA"/>
</dbReference>
<dbReference type="CCDS" id="CCDS14359.1"/>
<dbReference type="PIR" id="A55380">
    <property type="entry name" value="A55380"/>
</dbReference>
<dbReference type="RefSeq" id="NP_004454.2">
    <property type="nucleotide sequence ID" value="NM_004463.2"/>
</dbReference>
<dbReference type="SMR" id="P98174"/>
<dbReference type="BioGRID" id="108536">
    <property type="interactions" value="43"/>
</dbReference>
<dbReference type="ELM" id="P98174"/>
<dbReference type="FunCoup" id="P98174">
    <property type="interactions" value="159"/>
</dbReference>
<dbReference type="IntAct" id="P98174">
    <property type="interactions" value="25"/>
</dbReference>
<dbReference type="STRING" id="9606.ENSP00000364277"/>
<dbReference type="BindingDB" id="P98174"/>
<dbReference type="ChEMBL" id="CHEMBL2862"/>
<dbReference type="GlyGen" id="P98174">
    <property type="glycosylation" value="1 site"/>
</dbReference>
<dbReference type="iPTMnet" id="P98174"/>
<dbReference type="PhosphoSitePlus" id="P98174"/>
<dbReference type="BioMuta" id="FGD1"/>
<dbReference type="DMDM" id="28202247"/>
<dbReference type="jPOST" id="P98174"/>
<dbReference type="MassIVE" id="P98174"/>
<dbReference type="PaxDb" id="9606-ENSP00000364277"/>
<dbReference type="PeptideAtlas" id="P98174"/>
<dbReference type="ProteomicsDB" id="57809"/>
<dbReference type="Pumba" id="P98174"/>
<dbReference type="Antibodypedia" id="376">
    <property type="antibodies" value="61 antibodies from 21 providers"/>
</dbReference>
<dbReference type="DNASU" id="2245"/>
<dbReference type="Ensembl" id="ENST00000375135.4">
    <property type="protein sequence ID" value="ENSP00000364277.3"/>
    <property type="gene ID" value="ENSG00000102302.8"/>
</dbReference>
<dbReference type="GeneID" id="2245"/>
<dbReference type="KEGG" id="hsa:2245"/>
<dbReference type="MANE-Select" id="ENST00000375135.4">
    <property type="protein sequence ID" value="ENSP00000364277.3"/>
    <property type="RefSeq nucleotide sequence ID" value="NM_004463.3"/>
    <property type="RefSeq protein sequence ID" value="NP_004454.2"/>
</dbReference>
<dbReference type="UCSC" id="uc004dtg.3">
    <property type="organism name" value="human"/>
</dbReference>
<dbReference type="AGR" id="HGNC:3663"/>
<dbReference type="CTD" id="2245"/>
<dbReference type="DisGeNET" id="2245"/>
<dbReference type="GeneCards" id="FGD1"/>
<dbReference type="HGNC" id="HGNC:3663">
    <property type="gene designation" value="FGD1"/>
</dbReference>
<dbReference type="HPA" id="ENSG00000102302">
    <property type="expression patterns" value="Low tissue specificity"/>
</dbReference>
<dbReference type="MalaCards" id="FGD1"/>
<dbReference type="MIM" id="300546">
    <property type="type" value="gene"/>
</dbReference>
<dbReference type="MIM" id="305400">
    <property type="type" value="phenotype"/>
</dbReference>
<dbReference type="neXtProt" id="NX_P98174"/>
<dbReference type="OpenTargets" id="ENSG00000102302"/>
<dbReference type="Orphanet" id="915">
    <property type="disease" value="Aarskog-Scott syndrome"/>
</dbReference>
<dbReference type="PharmGKB" id="PA28102"/>
<dbReference type="VEuPathDB" id="HostDB:ENSG00000102302"/>
<dbReference type="eggNOG" id="KOG4424">
    <property type="taxonomic scope" value="Eukaryota"/>
</dbReference>
<dbReference type="GeneTree" id="ENSGT00940000159438"/>
<dbReference type="HOGENOM" id="CLU_011755_1_1_1"/>
<dbReference type="InParanoid" id="P98174"/>
<dbReference type="OMA" id="QQRWMAV"/>
<dbReference type="OrthoDB" id="660555at2759"/>
<dbReference type="PAN-GO" id="P98174">
    <property type="GO annotations" value="3 GO annotations based on evolutionary models"/>
</dbReference>
<dbReference type="PhylomeDB" id="P98174"/>
<dbReference type="TreeFam" id="TF316247"/>
<dbReference type="PathwayCommons" id="P98174"/>
<dbReference type="Reactome" id="R-HSA-193648">
    <property type="pathway name" value="NRAGE signals death through JNK"/>
</dbReference>
<dbReference type="Reactome" id="R-HSA-416482">
    <property type="pathway name" value="G alpha (12/13) signalling events"/>
</dbReference>
<dbReference type="Reactome" id="R-HSA-9013148">
    <property type="pathway name" value="CDC42 GTPase cycle"/>
</dbReference>
<dbReference type="SignaLink" id="P98174"/>
<dbReference type="SIGNOR" id="P98174"/>
<dbReference type="BioGRID-ORCS" id="2245">
    <property type="hits" value="14 hits in 774 CRISPR screens"/>
</dbReference>
<dbReference type="ChiTaRS" id="FGD1">
    <property type="organism name" value="human"/>
</dbReference>
<dbReference type="GeneWiki" id="FGD1"/>
<dbReference type="GenomeRNAi" id="2245"/>
<dbReference type="Pharos" id="P98174">
    <property type="development level" value="Tbio"/>
</dbReference>
<dbReference type="PRO" id="PR:P98174"/>
<dbReference type="Proteomes" id="UP000005640">
    <property type="component" value="Chromosome X"/>
</dbReference>
<dbReference type="RNAct" id="P98174">
    <property type="molecule type" value="protein"/>
</dbReference>
<dbReference type="Bgee" id="ENSG00000102302">
    <property type="expression patterns" value="Expressed in cortical plate and 119 other cell types or tissues"/>
</dbReference>
<dbReference type="ExpressionAtlas" id="P98174">
    <property type="expression patterns" value="baseline and differential"/>
</dbReference>
<dbReference type="GO" id="GO:0005737">
    <property type="term" value="C:cytoplasm"/>
    <property type="evidence" value="ECO:0000250"/>
    <property type="project" value="UniProtKB"/>
</dbReference>
<dbReference type="GO" id="GO:0005856">
    <property type="term" value="C:cytoskeleton"/>
    <property type="evidence" value="ECO:0007669"/>
    <property type="project" value="UniProtKB-SubCell"/>
</dbReference>
<dbReference type="GO" id="GO:0005829">
    <property type="term" value="C:cytosol"/>
    <property type="evidence" value="ECO:0000314"/>
    <property type="project" value="HPA"/>
</dbReference>
<dbReference type="GO" id="GO:0005794">
    <property type="term" value="C:Golgi apparatus"/>
    <property type="evidence" value="ECO:0000250"/>
    <property type="project" value="UniProtKB"/>
</dbReference>
<dbReference type="GO" id="GO:0030027">
    <property type="term" value="C:lamellipodium"/>
    <property type="evidence" value="ECO:0000250"/>
    <property type="project" value="UniProtKB"/>
</dbReference>
<dbReference type="GO" id="GO:0005886">
    <property type="term" value="C:plasma membrane"/>
    <property type="evidence" value="ECO:0000314"/>
    <property type="project" value="HPA"/>
</dbReference>
<dbReference type="GO" id="GO:0001726">
    <property type="term" value="C:ruffle"/>
    <property type="evidence" value="ECO:0000250"/>
    <property type="project" value="UniProtKB"/>
</dbReference>
<dbReference type="GO" id="GO:0005085">
    <property type="term" value="F:guanyl-nucleotide exchange factor activity"/>
    <property type="evidence" value="ECO:0000314"/>
    <property type="project" value="UniProtKB"/>
</dbReference>
<dbReference type="GO" id="GO:0031267">
    <property type="term" value="F:small GTPase binding"/>
    <property type="evidence" value="ECO:0000314"/>
    <property type="project" value="UniProtKB"/>
</dbReference>
<dbReference type="GO" id="GO:0008270">
    <property type="term" value="F:zinc ion binding"/>
    <property type="evidence" value="ECO:0007669"/>
    <property type="project" value="UniProtKB-KW"/>
</dbReference>
<dbReference type="GO" id="GO:0030036">
    <property type="term" value="P:actin cytoskeleton organization"/>
    <property type="evidence" value="ECO:0000314"/>
    <property type="project" value="UniProtKB"/>
</dbReference>
<dbReference type="GO" id="GO:0009887">
    <property type="term" value="P:animal organ morphogenesis"/>
    <property type="evidence" value="ECO:0000304"/>
    <property type="project" value="ProtInc"/>
</dbReference>
<dbReference type="GO" id="GO:0007010">
    <property type="term" value="P:cytoskeleton organization"/>
    <property type="evidence" value="ECO:0000250"/>
    <property type="project" value="UniProtKB"/>
</dbReference>
<dbReference type="GO" id="GO:0046847">
    <property type="term" value="P:filopodium assembly"/>
    <property type="evidence" value="ECO:0000314"/>
    <property type="project" value="UniProtKB"/>
</dbReference>
<dbReference type="GO" id="GO:0008360">
    <property type="term" value="P:regulation of cell shape"/>
    <property type="evidence" value="ECO:0000250"/>
    <property type="project" value="UniProtKB"/>
</dbReference>
<dbReference type="GO" id="GO:0043087">
    <property type="term" value="P:regulation of GTPase activity"/>
    <property type="evidence" value="ECO:0000314"/>
    <property type="project" value="UniProtKB"/>
</dbReference>
<dbReference type="GO" id="GO:0051056">
    <property type="term" value="P:regulation of small GTPase mediated signal transduction"/>
    <property type="evidence" value="ECO:0000304"/>
    <property type="project" value="Reactome"/>
</dbReference>
<dbReference type="GO" id="GO:0007165">
    <property type="term" value="P:signal transduction"/>
    <property type="evidence" value="ECO:0000304"/>
    <property type="project" value="ProtInc"/>
</dbReference>
<dbReference type="CDD" id="cd15741">
    <property type="entry name" value="FYVE_FGD1_2_4"/>
    <property type="match status" value="1"/>
</dbReference>
<dbReference type="CDD" id="cd01219">
    <property type="entry name" value="PH1_FGD1"/>
    <property type="match status" value="1"/>
</dbReference>
<dbReference type="CDD" id="cd13236">
    <property type="entry name" value="PH2_FGD1-4"/>
    <property type="match status" value="1"/>
</dbReference>
<dbReference type="CDD" id="cd00160">
    <property type="entry name" value="RhoGEF"/>
    <property type="match status" value="1"/>
</dbReference>
<dbReference type="FunFam" id="3.30.40.10:FF:000061">
    <property type="entry name" value="FYVE, RhoGEF and PH domain containing 1"/>
    <property type="match status" value="1"/>
</dbReference>
<dbReference type="FunFam" id="2.30.29.30:FF:000279">
    <property type="entry name" value="FYVE, RhoGEF and PH domain-containing protein 1"/>
    <property type="match status" value="1"/>
</dbReference>
<dbReference type="FunFam" id="1.20.900.10:FF:000013">
    <property type="entry name" value="FYVE, RhoGEF and PH domain-containing protein 4"/>
    <property type="match status" value="1"/>
</dbReference>
<dbReference type="FunFam" id="2.30.29.30:FF:000102">
    <property type="entry name" value="FYVE, RhoGEF and PH domain-containing protein 4"/>
    <property type="match status" value="1"/>
</dbReference>
<dbReference type="Gene3D" id="1.20.900.10">
    <property type="entry name" value="Dbl homology (DH) domain"/>
    <property type="match status" value="1"/>
</dbReference>
<dbReference type="Gene3D" id="2.30.29.30">
    <property type="entry name" value="Pleckstrin-homology domain (PH domain)/Phosphotyrosine-binding domain (PTB)"/>
    <property type="match status" value="2"/>
</dbReference>
<dbReference type="Gene3D" id="3.30.40.10">
    <property type="entry name" value="Zinc/RING finger domain, C3HC4 (zinc finger)"/>
    <property type="match status" value="1"/>
</dbReference>
<dbReference type="InterPro" id="IPR035899">
    <property type="entry name" value="DBL_dom_sf"/>
</dbReference>
<dbReference type="InterPro" id="IPR000219">
    <property type="entry name" value="DH_dom"/>
</dbReference>
<dbReference type="InterPro" id="IPR035941">
    <property type="entry name" value="FGD1-4_PH2"/>
</dbReference>
<dbReference type="InterPro" id="IPR035939">
    <property type="entry name" value="FGD1_PH1"/>
</dbReference>
<dbReference type="InterPro" id="IPR051092">
    <property type="entry name" value="FYVE_RhoGEF_PH"/>
</dbReference>
<dbReference type="InterPro" id="IPR011993">
    <property type="entry name" value="PH-like_dom_sf"/>
</dbReference>
<dbReference type="InterPro" id="IPR001849">
    <property type="entry name" value="PH_domain"/>
</dbReference>
<dbReference type="InterPro" id="IPR000306">
    <property type="entry name" value="Znf_FYVE"/>
</dbReference>
<dbReference type="InterPro" id="IPR017455">
    <property type="entry name" value="Znf_FYVE-rel"/>
</dbReference>
<dbReference type="InterPro" id="IPR013083">
    <property type="entry name" value="Znf_RING/FYVE/PHD"/>
</dbReference>
<dbReference type="PANTHER" id="PTHR12673">
    <property type="entry name" value="FACIOGENITAL DYSPLASIA PROTEIN"/>
    <property type="match status" value="1"/>
</dbReference>
<dbReference type="PANTHER" id="PTHR12673:SF79">
    <property type="entry name" value="FYVE, RHOGEF AND PH DOMAIN-CONTAINING PROTEIN 1"/>
    <property type="match status" value="1"/>
</dbReference>
<dbReference type="Pfam" id="PF01363">
    <property type="entry name" value="FYVE"/>
    <property type="match status" value="1"/>
</dbReference>
<dbReference type="Pfam" id="PF00169">
    <property type="entry name" value="PH"/>
    <property type="match status" value="2"/>
</dbReference>
<dbReference type="Pfam" id="PF00621">
    <property type="entry name" value="RhoGEF"/>
    <property type="match status" value="1"/>
</dbReference>
<dbReference type="SMART" id="SM00064">
    <property type="entry name" value="FYVE"/>
    <property type="match status" value="1"/>
</dbReference>
<dbReference type="SMART" id="SM00233">
    <property type="entry name" value="PH"/>
    <property type="match status" value="2"/>
</dbReference>
<dbReference type="SMART" id="SM00325">
    <property type="entry name" value="RhoGEF"/>
    <property type="match status" value="1"/>
</dbReference>
<dbReference type="SUPFAM" id="SSF48065">
    <property type="entry name" value="DBL homology domain (DH-domain)"/>
    <property type="match status" value="1"/>
</dbReference>
<dbReference type="SUPFAM" id="SSF50729">
    <property type="entry name" value="PH domain-like"/>
    <property type="match status" value="2"/>
</dbReference>
<dbReference type="PROSITE" id="PS50010">
    <property type="entry name" value="DH_2"/>
    <property type="match status" value="1"/>
</dbReference>
<dbReference type="PROSITE" id="PS50003">
    <property type="entry name" value="PH_DOMAIN"/>
    <property type="match status" value="2"/>
</dbReference>
<dbReference type="PROSITE" id="PS50178">
    <property type="entry name" value="ZF_FYVE"/>
    <property type="match status" value="1"/>
</dbReference>
<keyword id="KW-0966">Cell projection</keyword>
<keyword id="KW-0963">Cytoplasm</keyword>
<keyword id="KW-0206">Cytoskeleton</keyword>
<keyword id="KW-0225">Disease variant</keyword>
<keyword id="KW-0344">Guanine-nucleotide releasing factor</keyword>
<keyword id="KW-0479">Metal-binding</keyword>
<keyword id="KW-0597">Phosphoprotein</keyword>
<keyword id="KW-1267">Proteomics identification</keyword>
<keyword id="KW-1185">Reference proteome</keyword>
<keyword id="KW-0677">Repeat</keyword>
<keyword id="KW-0862">Zinc</keyword>
<keyword id="KW-0863">Zinc-finger</keyword>
<feature type="chain" id="PRO_0000080940" description="FYVE, RhoGEF and PH domain-containing protein 1">
    <location>
        <begin position="1"/>
        <end position="961"/>
    </location>
</feature>
<feature type="domain" description="DH" evidence="3">
    <location>
        <begin position="373"/>
        <end position="561"/>
    </location>
</feature>
<feature type="domain" description="PH 1" evidence="5">
    <location>
        <begin position="590"/>
        <end position="689"/>
    </location>
</feature>
<feature type="domain" description="PH 2" evidence="5">
    <location>
        <begin position="821"/>
        <end position="921"/>
    </location>
</feature>
<feature type="zinc finger region" description="FYVE-type" evidence="4">
    <location>
        <begin position="730"/>
        <end position="790"/>
    </location>
</feature>
<feature type="region of interest" description="Disordered" evidence="6">
    <location>
        <begin position="1"/>
        <end position="353"/>
    </location>
</feature>
<feature type="region of interest" description="Disordered" evidence="6">
    <location>
        <begin position="702"/>
        <end position="726"/>
    </location>
</feature>
<feature type="region of interest" description="Disordered" evidence="6">
    <location>
        <begin position="925"/>
        <end position="961"/>
    </location>
</feature>
<feature type="short sequence motif" description="SH3-binding" evidence="2">
    <location>
        <begin position="171"/>
        <end position="187"/>
    </location>
</feature>
<feature type="compositionally biased region" description="Gly residues" evidence="6">
    <location>
        <begin position="1"/>
        <end position="11"/>
    </location>
</feature>
<feature type="compositionally biased region" description="Low complexity" evidence="6">
    <location>
        <begin position="27"/>
        <end position="38"/>
    </location>
</feature>
<feature type="compositionally biased region" description="Basic and acidic residues" evidence="6">
    <location>
        <begin position="125"/>
        <end position="135"/>
    </location>
</feature>
<feature type="compositionally biased region" description="Pro residues" evidence="6">
    <location>
        <begin position="156"/>
        <end position="165"/>
    </location>
</feature>
<feature type="compositionally biased region" description="Pro residues" evidence="6">
    <location>
        <begin position="172"/>
        <end position="190"/>
    </location>
</feature>
<feature type="compositionally biased region" description="Low complexity" evidence="6">
    <location>
        <begin position="199"/>
        <end position="213"/>
    </location>
</feature>
<feature type="compositionally biased region" description="Pro residues" evidence="6">
    <location>
        <begin position="231"/>
        <end position="255"/>
    </location>
</feature>
<feature type="compositionally biased region" description="Basic and acidic residues" evidence="6">
    <location>
        <begin position="273"/>
        <end position="284"/>
    </location>
</feature>
<feature type="compositionally biased region" description="Low complexity" evidence="6">
    <location>
        <begin position="285"/>
        <end position="294"/>
    </location>
</feature>
<feature type="compositionally biased region" description="Low complexity" evidence="6">
    <location>
        <begin position="316"/>
        <end position="325"/>
    </location>
</feature>
<feature type="compositionally biased region" description="Acidic residues" evidence="6">
    <location>
        <begin position="335"/>
        <end position="351"/>
    </location>
</feature>
<feature type="binding site" evidence="4">
    <location>
        <position position="736"/>
    </location>
    <ligand>
        <name>Zn(2+)</name>
        <dbReference type="ChEBI" id="CHEBI:29105"/>
        <label>1</label>
    </ligand>
</feature>
<feature type="binding site" evidence="4">
    <location>
        <position position="739"/>
    </location>
    <ligand>
        <name>Zn(2+)</name>
        <dbReference type="ChEBI" id="CHEBI:29105"/>
        <label>1</label>
    </ligand>
</feature>
<feature type="binding site" evidence="4">
    <location>
        <position position="753"/>
    </location>
    <ligand>
        <name>Zn(2+)</name>
        <dbReference type="ChEBI" id="CHEBI:29105"/>
        <label>2</label>
    </ligand>
</feature>
<feature type="binding site" evidence="4">
    <location>
        <position position="756"/>
    </location>
    <ligand>
        <name>Zn(2+)</name>
        <dbReference type="ChEBI" id="CHEBI:29105"/>
        <label>2</label>
    </ligand>
</feature>
<feature type="binding site" evidence="4">
    <location>
        <position position="761"/>
    </location>
    <ligand>
        <name>Zn(2+)</name>
        <dbReference type="ChEBI" id="CHEBI:29105"/>
        <label>1</label>
    </ligand>
</feature>
<feature type="binding site" evidence="4">
    <location>
        <position position="764"/>
    </location>
    <ligand>
        <name>Zn(2+)</name>
        <dbReference type="ChEBI" id="CHEBI:29105"/>
        <label>1</label>
    </ligand>
</feature>
<feature type="binding site" evidence="4">
    <location>
        <position position="782"/>
    </location>
    <ligand>
        <name>Zn(2+)</name>
        <dbReference type="ChEBI" id="CHEBI:29105"/>
        <label>2</label>
    </ligand>
</feature>
<feature type="binding site" evidence="4">
    <location>
        <position position="785"/>
    </location>
    <ligand>
        <name>Zn(2+)</name>
        <dbReference type="ChEBI" id="CHEBI:29105"/>
        <label>2</label>
    </ligand>
</feature>
<feature type="modified residue" description="Phosphoserine" evidence="13">
    <location>
        <position position="48"/>
    </location>
</feature>
<feature type="modified residue" description="Phosphoserine" evidence="13">
    <location>
        <position position="205"/>
    </location>
</feature>
<feature type="modified residue" description="Phosphothreonine" evidence="13">
    <location>
        <position position="711"/>
    </location>
</feature>
<feature type="modified residue" description="Phosphoserine" evidence="13">
    <location>
        <position position="715"/>
    </location>
</feature>
<feature type="sequence variant" id="VAR_019268" description="In AAS." evidence="10">
    <original>S</original>
    <variation>I</variation>
    <location>
        <position position="205"/>
    </location>
</feature>
<feature type="sequence variant" id="VAR_019269" description="In dbSNP:rs28935498." evidence="9">
    <original>P</original>
    <variation>L</variation>
    <location>
        <position position="312"/>
    </location>
</feature>
<feature type="sequence variant" id="VAR_019270" description="In AAS." evidence="10">
    <original>E</original>
    <variation>A</variation>
    <location>
        <position position="380"/>
    </location>
</feature>
<feature type="sequence variant" id="VAR_019271" description="In AAS; dbSNP:rs137853266." evidence="10">
    <original>R</original>
    <variation>H</variation>
    <location>
        <position position="443"/>
    </location>
</feature>
<feature type="sequence variant" id="VAR_015236" description="In AAS; dbSNP:rs137853264." evidence="8">
    <original>R</original>
    <variation>H</variation>
    <location>
        <position position="522"/>
    </location>
</feature>
<feature type="sequence variant" id="VAR_015237" description="In AAS; dbSNP:rs28935497." evidence="7">
    <original>R</original>
    <variation>Q</variation>
    <location>
        <position position="610"/>
    </location>
</feature>
<feature type="sequence conflict" description="In Ref. 1." evidence="12" ref="1">
    <original>AGPSEPEHPATNPP</original>
    <variation>RRAFGARTPGHEPA</variation>
    <location>
        <begin position="10"/>
        <end position="23"/>
    </location>
</feature>
<feature type="sequence conflict" description="In Ref. 1; AAA57004." evidence="12" ref="1">
    <original>A</original>
    <variation>G</variation>
    <location>
        <position position="195"/>
    </location>
</feature>
<accession>P98174</accession>
<accession>Q5H999</accession>
<accession>Q8N4D9</accession>
<gene>
    <name type="primary">FGD1</name>
    <name type="synonym">FGDY</name>
    <name type="synonym">ZFYVE3</name>
</gene>
<evidence type="ECO:0000250" key="1"/>
<evidence type="ECO:0000255" key="2"/>
<evidence type="ECO:0000255" key="3">
    <source>
        <dbReference type="PROSITE-ProRule" id="PRU00062"/>
    </source>
</evidence>
<evidence type="ECO:0000255" key="4">
    <source>
        <dbReference type="PROSITE-ProRule" id="PRU00091"/>
    </source>
</evidence>
<evidence type="ECO:0000255" key="5">
    <source>
        <dbReference type="PROSITE-ProRule" id="PRU00145"/>
    </source>
</evidence>
<evidence type="ECO:0000256" key="6">
    <source>
        <dbReference type="SAM" id="MobiDB-lite"/>
    </source>
</evidence>
<evidence type="ECO:0000269" key="7">
    <source>
    </source>
</evidence>
<evidence type="ECO:0000269" key="8">
    <source>
    </source>
</evidence>
<evidence type="ECO:0000269" key="9">
    <source>
    </source>
</evidence>
<evidence type="ECO:0000269" key="10">
    <source>
    </source>
</evidence>
<evidence type="ECO:0000269" key="11">
    <source>
    </source>
</evidence>
<evidence type="ECO:0000305" key="12"/>
<evidence type="ECO:0007744" key="13">
    <source>
    </source>
</evidence>
<name>FGD1_HUMAN</name>